<accession>P21238</accession>
<accession>Q42554</accession>
<accession>Q56WB8</accession>
<accession>Q8L5U4</accession>
<comment type="function">
    <text evidence="4 6">Binds RuBisCO small and large subunits and is implicated in the assembly of the enzyme oligomer. Involved in protein assisted folding. Required for proper chloroplast development.</text>
</comment>
<comment type="subunit">
    <text evidence="6">Part of the Cpn60 complex composed of 7 alpha and 7 beta subunits. This complex shows ATPase activity. The Cpn60 complex interacts with the Cpn10 complex.</text>
</comment>
<comment type="interaction">
    <interactant intactId="EBI-1253243">
        <id>P21238</id>
    </interactant>
    <interactant intactId="EBI-4426557">
        <id>Q84MB2</id>
        <label>TIFY8</label>
    </interactant>
    <organismsDiffer>false</organismsDiffer>
    <experiments>3</experiments>
</comment>
<comment type="subcellular location">
    <subcellularLocation>
        <location>Plastid</location>
        <location>Chloroplast</location>
    </subcellularLocation>
</comment>
<comment type="tissue specificity">
    <text evidence="2">Expressed in leaves, stems, siliques and flowers.</text>
</comment>
<comment type="induction">
    <text evidence="3">Up-regulated by light.</text>
</comment>
<comment type="disruption phenotype">
    <text evidence="2 4">Embryos are albino, can germinate but are unable to produce viable seedlings.</text>
</comment>
<comment type="miscellaneous">
    <text>Assisted protein folding requires ATP hydrolysis, but not K(+) ions.</text>
</comment>
<comment type="similarity">
    <text evidence="7">Belongs to the chaperonin (HSP60) family.</text>
</comment>
<sequence>MASANALSSASVLCSSRQSKLGGGNQQQGQRVSYNKRTIRRFSVRANVKEIAFDQHSRAALQAGIDKLADCVGLTLGPRGRNVVLDEFGSPKVVNDGVTIARAIELPNAMENAGAALIREVASKTNDSAGDGTTTASILAREIIKHGLLSVTSGANPVSLKRGIDKTVQGLIEELQKKARPVKGRDDIRAVASISAGNDDLIGSMIADAIDKVGPDGVLSIESSSSFETTVEVEEGMEIDRGYISPQFVTNPEKLLAEFENARVLITDQKITAIKDIIPILEKTTQLRAPLLIIAEDVTGEALATLVVNKLRGVLNVVAVKAPGFGERRKAMLQDIAILTGAEYLAMDMSLLVENATIDQLGIARKVTISKDSTTLIADAASKDELQARIAQLKKELFETDSVYDSEKLAERIAKLSGGVAVIKVGAATETELEDRKLRIEDAKNATFAAIEEGIVPGGGAALVHLSTVIPAIKETFEDADERLGADIVQKALLSPAALIAQNAGVEGEVVVEKIMFSDWENGYNAMTDTYENLFEAGVIDPAKVTRCALQNAASVAGMVLTTQAIVVDKPKPKAPAAAAPEGLMV</sequence>
<name>CPNA1_ARATH</name>
<reference key="1">
    <citation type="journal article" date="2001" name="Plant Physiol.">
        <title>The Arabidopsis embryo mutant schlepperless has a defect in the chaperonin-60alpha gene.</title>
        <authorList>
            <person name="Apuya N.R."/>
            <person name="Yadegari R."/>
            <person name="Fischer R.L."/>
            <person name="Harada J.J."/>
            <person name="Zimmerman J.L."/>
            <person name="Goldberg R.B."/>
        </authorList>
    </citation>
    <scope>NUCLEOTIDE SEQUENCE [GENOMIC DNA]</scope>
    <scope>TISSUE SPECIFICITY</scope>
    <scope>DISRUPTION PHENOTYPE</scope>
    <source>
        <strain>cv. Wassilewskija</strain>
    </source>
</reference>
<reference key="2">
    <citation type="journal article" date="1999" name="Nature">
        <title>Sequence and analysis of chromosome 2 of the plant Arabidopsis thaliana.</title>
        <authorList>
            <person name="Lin X."/>
            <person name="Kaul S."/>
            <person name="Rounsley S.D."/>
            <person name="Shea T.P."/>
            <person name="Benito M.-I."/>
            <person name="Town C.D."/>
            <person name="Fujii C.Y."/>
            <person name="Mason T.M."/>
            <person name="Bowman C.L."/>
            <person name="Barnstead M.E."/>
            <person name="Feldblyum T.V."/>
            <person name="Buell C.R."/>
            <person name="Ketchum K.A."/>
            <person name="Lee J.J."/>
            <person name="Ronning C.M."/>
            <person name="Koo H.L."/>
            <person name="Moffat K.S."/>
            <person name="Cronin L.A."/>
            <person name="Shen M."/>
            <person name="Pai G."/>
            <person name="Van Aken S."/>
            <person name="Umayam L."/>
            <person name="Tallon L.J."/>
            <person name="Gill J.E."/>
            <person name="Adams M.D."/>
            <person name="Carrera A.J."/>
            <person name="Creasy T.H."/>
            <person name="Goodman H.M."/>
            <person name="Somerville C.R."/>
            <person name="Copenhaver G.P."/>
            <person name="Preuss D."/>
            <person name="Nierman W.C."/>
            <person name="White O."/>
            <person name="Eisen J.A."/>
            <person name="Salzberg S.L."/>
            <person name="Fraser C.M."/>
            <person name="Venter J.C."/>
        </authorList>
    </citation>
    <scope>NUCLEOTIDE SEQUENCE [LARGE SCALE GENOMIC DNA]</scope>
    <source>
        <strain>cv. Columbia</strain>
    </source>
</reference>
<reference key="3">
    <citation type="journal article" date="2017" name="Plant J.">
        <title>Araport11: a complete reannotation of the Arabidopsis thaliana reference genome.</title>
        <authorList>
            <person name="Cheng C.Y."/>
            <person name="Krishnakumar V."/>
            <person name="Chan A.P."/>
            <person name="Thibaud-Nissen F."/>
            <person name="Schobel S."/>
            <person name="Town C.D."/>
        </authorList>
    </citation>
    <scope>GENOME REANNOTATION</scope>
    <source>
        <strain>cv. Columbia</strain>
    </source>
</reference>
<reference key="4">
    <citation type="journal article" date="2003" name="Science">
        <title>Empirical analysis of transcriptional activity in the Arabidopsis genome.</title>
        <authorList>
            <person name="Yamada K."/>
            <person name="Lim J."/>
            <person name="Dale J.M."/>
            <person name="Chen H."/>
            <person name="Shinn P."/>
            <person name="Palm C.J."/>
            <person name="Southwick A.M."/>
            <person name="Wu H.C."/>
            <person name="Kim C.J."/>
            <person name="Nguyen M."/>
            <person name="Pham P.K."/>
            <person name="Cheuk R.F."/>
            <person name="Karlin-Newmann G."/>
            <person name="Liu S.X."/>
            <person name="Lam B."/>
            <person name="Sakano H."/>
            <person name="Wu T."/>
            <person name="Yu G."/>
            <person name="Miranda M."/>
            <person name="Quach H.L."/>
            <person name="Tripp M."/>
            <person name="Chang C.H."/>
            <person name="Lee J.M."/>
            <person name="Toriumi M.J."/>
            <person name="Chan M.M."/>
            <person name="Tang C.C."/>
            <person name="Onodera C.S."/>
            <person name="Deng J.M."/>
            <person name="Akiyama K."/>
            <person name="Ansari Y."/>
            <person name="Arakawa T."/>
            <person name="Banh J."/>
            <person name="Banno F."/>
            <person name="Bowser L."/>
            <person name="Brooks S.Y."/>
            <person name="Carninci P."/>
            <person name="Chao Q."/>
            <person name="Choy N."/>
            <person name="Enju A."/>
            <person name="Goldsmith A.D."/>
            <person name="Gurjal M."/>
            <person name="Hansen N.F."/>
            <person name="Hayashizaki Y."/>
            <person name="Johnson-Hopson C."/>
            <person name="Hsuan V.W."/>
            <person name="Iida K."/>
            <person name="Karnes M."/>
            <person name="Khan S."/>
            <person name="Koesema E."/>
            <person name="Ishida J."/>
            <person name="Jiang P.X."/>
            <person name="Jones T."/>
            <person name="Kawai J."/>
            <person name="Kamiya A."/>
            <person name="Meyers C."/>
            <person name="Nakajima M."/>
            <person name="Narusaka M."/>
            <person name="Seki M."/>
            <person name="Sakurai T."/>
            <person name="Satou M."/>
            <person name="Tamse R."/>
            <person name="Vaysberg M."/>
            <person name="Wallender E.K."/>
            <person name="Wong C."/>
            <person name="Yamamura Y."/>
            <person name="Yuan S."/>
            <person name="Shinozaki K."/>
            <person name="Davis R.W."/>
            <person name="Theologis A."/>
            <person name="Ecker J.R."/>
        </authorList>
    </citation>
    <scope>NUCLEOTIDE SEQUENCE [LARGE SCALE MRNA]</scope>
    <source>
        <strain>cv. Columbia</strain>
    </source>
</reference>
<reference key="5">
    <citation type="submission" date="2002-03" db="EMBL/GenBank/DDBJ databases">
        <title>Full-length cDNA from Arabidopsis thaliana.</title>
        <authorList>
            <person name="Brover V.V."/>
            <person name="Troukhan M.E."/>
            <person name="Alexandrov N.A."/>
            <person name="Lu Y.-P."/>
            <person name="Flavell R.B."/>
            <person name="Feldmann K.A."/>
        </authorList>
    </citation>
    <scope>NUCLEOTIDE SEQUENCE [LARGE SCALE MRNA]</scope>
</reference>
<reference key="6">
    <citation type="journal article" date="1990" name="Gene">
        <title>Unique composition of plastid chaperonin-60: alpha and beta polypeptide-encoding genes are highly divergent.</title>
        <authorList>
            <person name="Martel R."/>
            <person name="Cloney L.P."/>
            <person name="Pelcher L.E."/>
            <person name="Hemmingsen S.M."/>
        </authorList>
    </citation>
    <scope>NUCLEOTIDE SEQUENCE [MRNA] OF 67-311</scope>
    <source>
        <strain>cv. Columbia</strain>
    </source>
</reference>
<reference key="7">
    <citation type="submission" date="2005-03" db="EMBL/GenBank/DDBJ databases">
        <title>Large-scale analysis of RIKEN Arabidopsis full-length (RAFL) cDNAs.</title>
        <authorList>
            <person name="Totoki Y."/>
            <person name="Seki M."/>
            <person name="Ishida J."/>
            <person name="Nakajima M."/>
            <person name="Enju A."/>
            <person name="Kamiya A."/>
            <person name="Narusaka M."/>
            <person name="Shin-i T."/>
            <person name="Nakagawa M."/>
            <person name="Sakamoto N."/>
            <person name="Oishi K."/>
            <person name="Kohara Y."/>
            <person name="Kobayashi M."/>
            <person name="Toyoda A."/>
            <person name="Sakaki Y."/>
            <person name="Sakurai T."/>
            <person name="Iida K."/>
            <person name="Akiyama K."/>
            <person name="Satou M."/>
            <person name="Toyoda T."/>
            <person name="Konagaya A."/>
            <person name="Carninci P."/>
            <person name="Kawai J."/>
            <person name="Hayashizaki Y."/>
            <person name="Shinozaki K."/>
        </authorList>
    </citation>
    <scope>NUCLEOTIDE SEQUENCE [LARGE SCALE MRNA] OF 254-586</scope>
</reference>
<reference key="8">
    <citation type="journal article" date="1993" name="Plant Physiol.">
        <title>Differential involvement of the circadian clock in the expression of genes required for ribulose-1,5-bisphosphate carboxylase/oxygenase synthesis, assembly, and activation in Arabidopsis thaliana.</title>
        <authorList>
            <person name="Pilgrim M.L."/>
            <person name="McClung C.R."/>
        </authorList>
    </citation>
    <scope>INDUCTION BY LIGHT</scope>
</reference>
<reference key="9">
    <citation type="journal article" date="1995" name="J. Biol. Chem.">
        <title>Functional characterization of the higher plant chloroplast chaperonins.</title>
        <authorList>
            <person name="Viitanen P.V."/>
            <person name="Schmidt M."/>
            <person name="Buchner J."/>
            <person name="Suzuki T."/>
            <person name="Vierling E."/>
            <person name="Dickson R."/>
            <person name="Lorimer G.H."/>
            <person name="Gatenby A."/>
            <person name="Soll J."/>
        </authorList>
    </citation>
    <scope>FUNCTION</scope>
    <scope>INTERACTION</scope>
</reference>
<reference key="10">
    <citation type="journal article" date="2001" name="Cell Stress Chaperones">
        <title>Arabidopsis thaliana type I and II chaperonins.</title>
        <authorList>
            <person name="Hill J.E."/>
            <person name="Hemmingsen S.M."/>
        </authorList>
    </citation>
    <scope>GENE FAMILY</scope>
    <scope>NOMENCLATURE</scope>
</reference>
<reference key="11">
    <citation type="journal article" date="2009" name="BMC Plant Biol.">
        <title>Plastid chaperonin proteins Cpn60 alpha and Cpn60 beta are required for plastid division in Arabidopsis thaliana.</title>
        <authorList>
            <person name="Suzuki K."/>
            <person name="Nakanishi H."/>
            <person name="Bower J."/>
            <person name="Yoder D.W."/>
            <person name="Osteryoung K.W."/>
            <person name="Miyagishima S.Y."/>
        </authorList>
    </citation>
    <scope>FUNCTION</scope>
    <scope>MUTAGENESIS OF ALA-342</scope>
    <scope>DISRUPTION PHENOTYPE</scope>
</reference>
<reference key="12">
    <citation type="journal article" date="2009" name="J. Proteomics">
        <title>Phosphoproteomic analysis of nuclei-enriched fractions from Arabidopsis thaliana.</title>
        <authorList>
            <person name="Jones A.M.E."/>
            <person name="MacLean D."/>
            <person name="Studholme D.J."/>
            <person name="Serna-Sanz A."/>
            <person name="Andreasson E."/>
            <person name="Rathjen J.P."/>
            <person name="Peck S.C."/>
        </authorList>
    </citation>
    <scope>PHOSPHORYLATION [LARGE SCALE ANALYSIS] AT SER-90</scope>
    <scope>IDENTIFICATION BY MASS SPECTROMETRY [LARGE SCALE ANALYSIS]</scope>
    <source>
        <strain>cv. Columbia</strain>
    </source>
</reference>
<reference key="13">
    <citation type="journal article" date="2009" name="Plant Physiol.">
        <title>Large-scale Arabidopsis phosphoproteome profiling reveals novel chloroplast kinase substrates and phosphorylation networks.</title>
        <authorList>
            <person name="Reiland S."/>
            <person name="Messerli G."/>
            <person name="Baerenfaller K."/>
            <person name="Gerrits B."/>
            <person name="Endler A."/>
            <person name="Grossmann J."/>
            <person name="Gruissem W."/>
            <person name="Baginsky S."/>
        </authorList>
    </citation>
    <scope>PHOSPHORYLATION [LARGE SCALE ANALYSIS] AT SER-90</scope>
    <scope>IDENTIFICATION BY MASS SPECTROMETRY [LARGE SCALE ANALYSIS]</scope>
</reference>
<reference key="14">
    <citation type="journal article" date="2011" name="PLoS Biol.">
        <title>A chaperonin subunit with unique structures is essential for folding of a specific substrate.</title>
        <authorList>
            <person name="Peng L."/>
            <person name="Fukao Y."/>
            <person name="Myouga F."/>
            <person name="Motohashi R."/>
            <person name="Shinozaki K."/>
            <person name="Shikanai T."/>
        </authorList>
    </citation>
    <scope>MUTAGENESIS OF ASP-335</scope>
    <scope>GENE FAMILY</scope>
    <scope>NOMENCLATURE</scope>
</reference>
<protein>
    <recommendedName>
        <fullName>Chaperonin 60 subunit alpha 1, chloroplastic</fullName>
        <shortName>CPN-60 alpha 1</shortName>
    </recommendedName>
    <alternativeName>
        <fullName>Protein SCHLEPPERLESS</fullName>
    </alternativeName>
    <alternativeName>
        <fullName>RuBisCO large subunit-binding protein subunit alpha 1</fullName>
    </alternativeName>
</protein>
<keyword id="KW-0067">ATP-binding</keyword>
<keyword id="KW-0143">Chaperone</keyword>
<keyword id="KW-0150">Chloroplast</keyword>
<keyword id="KW-0547">Nucleotide-binding</keyword>
<keyword id="KW-0597">Phosphoprotein</keyword>
<keyword id="KW-0934">Plastid</keyword>
<keyword id="KW-1185">Reference proteome</keyword>
<keyword id="KW-0809">Transit peptide</keyword>
<proteinExistence type="evidence at protein level"/>
<evidence type="ECO:0000250" key="1"/>
<evidence type="ECO:0000269" key="2">
    <source>
    </source>
</evidence>
<evidence type="ECO:0000269" key="3">
    <source>
    </source>
</evidence>
<evidence type="ECO:0000269" key="4">
    <source>
    </source>
</evidence>
<evidence type="ECO:0000269" key="5">
    <source>
    </source>
</evidence>
<evidence type="ECO:0000269" key="6">
    <source ref="9"/>
</evidence>
<evidence type="ECO:0000305" key="7"/>
<evidence type="ECO:0007744" key="8">
    <source>
    </source>
</evidence>
<evidence type="ECO:0007744" key="9">
    <source>
    </source>
</evidence>
<gene>
    <name type="primary">CPN60A1</name>
    <name type="synonym">Cpn60-A(2)</name>
    <name type="synonym">SLP</name>
    <name type="ordered locus">At2g28000</name>
    <name type="ORF">T1E2.8</name>
</gene>
<dbReference type="EMBL" id="U49357">
    <property type="protein sequence ID" value="AAA92061.1"/>
    <property type="molecule type" value="Genomic_DNA"/>
</dbReference>
<dbReference type="EMBL" id="AC006929">
    <property type="protein sequence ID" value="AAD21502.1"/>
    <property type="molecule type" value="Genomic_DNA"/>
</dbReference>
<dbReference type="EMBL" id="CP002685">
    <property type="protein sequence ID" value="AEC08068.1"/>
    <property type="molecule type" value="Genomic_DNA"/>
</dbReference>
<dbReference type="EMBL" id="BT002441">
    <property type="protein sequence ID" value="AAO00801.1"/>
    <property type="molecule type" value="mRNA"/>
</dbReference>
<dbReference type="EMBL" id="BT008784">
    <property type="protein sequence ID" value="AAP68223.1"/>
    <property type="molecule type" value="mRNA"/>
</dbReference>
<dbReference type="EMBL" id="AY086555">
    <property type="protein sequence ID" value="AAM63618.1"/>
    <property type="molecule type" value="mRNA"/>
</dbReference>
<dbReference type="EMBL" id="M35597">
    <property type="protein sequence ID" value="AAA32724.1"/>
    <property type="molecule type" value="mRNA"/>
</dbReference>
<dbReference type="EMBL" id="AK222126">
    <property type="protein sequence ID" value="BAD95121.1"/>
    <property type="molecule type" value="mRNA"/>
</dbReference>
<dbReference type="PIR" id="S71235">
    <property type="entry name" value="S71235"/>
</dbReference>
<dbReference type="SMR" id="P21238"/>
<dbReference type="BioGRID" id="2694">
    <property type="interactions" value="32"/>
</dbReference>
<dbReference type="FunCoup" id="P21238">
    <property type="interactions" value="1076"/>
</dbReference>
<dbReference type="IntAct" id="P21238">
    <property type="interactions" value="4"/>
</dbReference>
<dbReference type="STRING" id="3702.P21238"/>
<dbReference type="iPTMnet" id="P21238"/>
<dbReference type="MetOSite" id="P21238"/>
<dbReference type="SwissPalm" id="P21238"/>
<dbReference type="PaxDb" id="3702-AT2G28000.1"/>
<dbReference type="ProteomicsDB" id="220437"/>
<dbReference type="EnsemblPlants" id="AT2G28000.1">
    <property type="protein sequence ID" value="AT2G28000.1"/>
    <property type="gene ID" value="AT2G28000"/>
</dbReference>
<dbReference type="GeneID" id="817344"/>
<dbReference type="Gramene" id="AT2G28000.1">
    <property type="protein sequence ID" value="AT2G28000.1"/>
    <property type="gene ID" value="AT2G28000"/>
</dbReference>
<dbReference type="KEGG" id="ath:AT2G28000"/>
<dbReference type="Araport" id="AT2G28000"/>
<dbReference type="TAIR" id="AT2G28000">
    <property type="gene designation" value="CPN60A"/>
</dbReference>
<dbReference type="eggNOG" id="KOG0356">
    <property type="taxonomic scope" value="Eukaryota"/>
</dbReference>
<dbReference type="HOGENOM" id="CLU_016503_1_1_1"/>
<dbReference type="InParanoid" id="P21238"/>
<dbReference type="OMA" id="WILICIT"/>
<dbReference type="OrthoDB" id="1081762at2759"/>
<dbReference type="PhylomeDB" id="P21238"/>
<dbReference type="CD-CODE" id="4299E36E">
    <property type="entry name" value="Nucleolus"/>
</dbReference>
<dbReference type="PRO" id="PR:P21238"/>
<dbReference type="Proteomes" id="UP000006548">
    <property type="component" value="Chromosome 2"/>
</dbReference>
<dbReference type="ExpressionAtlas" id="P21238">
    <property type="expression patterns" value="baseline and differential"/>
</dbReference>
<dbReference type="GO" id="GO:0048046">
    <property type="term" value="C:apoplast"/>
    <property type="evidence" value="ECO:0007005"/>
    <property type="project" value="TAIR"/>
</dbReference>
<dbReference type="GO" id="GO:0009507">
    <property type="term" value="C:chloroplast"/>
    <property type="evidence" value="ECO:0000314"/>
    <property type="project" value="TAIR"/>
</dbReference>
<dbReference type="GO" id="GO:0009941">
    <property type="term" value="C:chloroplast envelope"/>
    <property type="evidence" value="ECO:0007005"/>
    <property type="project" value="TAIR"/>
</dbReference>
<dbReference type="GO" id="GO:0009570">
    <property type="term" value="C:chloroplast stroma"/>
    <property type="evidence" value="ECO:0007005"/>
    <property type="project" value="TAIR"/>
</dbReference>
<dbReference type="GO" id="GO:0022626">
    <property type="term" value="C:cytosolic ribosome"/>
    <property type="evidence" value="ECO:0007005"/>
    <property type="project" value="TAIR"/>
</dbReference>
<dbReference type="GO" id="GO:0005739">
    <property type="term" value="C:mitochondrion"/>
    <property type="evidence" value="ECO:0007005"/>
    <property type="project" value="TAIR"/>
</dbReference>
<dbReference type="GO" id="GO:0005777">
    <property type="term" value="C:peroxisome"/>
    <property type="evidence" value="ECO:0007005"/>
    <property type="project" value="TAIR"/>
</dbReference>
<dbReference type="GO" id="GO:0010319">
    <property type="term" value="C:stromule"/>
    <property type="evidence" value="ECO:0000314"/>
    <property type="project" value="TAIR"/>
</dbReference>
<dbReference type="GO" id="GO:0009579">
    <property type="term" value="C:thylakoid"/>
    <property type="evidence" value="ECO:0007005"/>
    <property type="project" value="TAIR"/>
</dbReference>
<dbReference type="GO" id="GO:0005524">
    <property type="term" value="F:ATP binding"/>
    <property type="evidence" value="ECO:0007669"/>
    <property type="project" value="UniProtKB-KW"/>
</dbReference>
<dbReference type="GO" id="GO:0140662">
    <property type="term" value="F:ATP-dependent protein folding chaperone"/>
    <property type="evidence" value="ECO:0007669"/>
    <property type="project" value="InterPro"/>
</dbReference>
<dbReference type="GO" id="GO:0009658">
    <property type="term" value="P:chloroplast organization"/>
    <property type="evidence" value="ECO:0000315"/>
    <property type="project" value="TAIR"/>
</dbReference>
<dbReference type="GO" id="GO:0009793">
    <property type="term" value="P:embryo development ending in seed dormancy"/>
    <property type="evidence" value="ECO:0000315"/>
    <property type="project" value="TAIR"/>
</dbReference>
<dbReference type="GO" id="GO:0006457">
    <property type="term" value="P:protein folding"/>
    <property type="evidence" value="ECO:0000304"/>
    <property type="project" value="TAIR"/>
</dbReference>
<dbReference type="GO" id="GO:0042026">
    <property type="term" value="P:protein refolding"/>
    <property type="evidence" value="ECO:0007669"/>
    <property type="project" value="InterPro"/>
</dbReference>
<dbReference type="GO" id="GO:0050821">
    <property type="term" value="P:protein stabilization"/>
    <property type="evidence" value="ECO:0000315"/>
    <property type="project" value="TAIR"/>
</dbReference>
<dbReference type="CDD" id="cd03344">
    <property type="entry name" value="GroEL"/>
    <property type="match status" value="1"/>
</dbReference>
<dbReference type="FunFam" id="3.50.7.10:FF:000001">
    <property type="entry name" value="60 kDa chaperonin"/>
    <property type="match status" value="1"/>
</dbReference>
<dbReference type="Gene3D" id="3.50.7.10">
    <property type="entry name" value="GroEL"/>
    <property type="match status" value="1"/>
</dbReference>
<dbReference type="Gene3D" id="1.10.560.10">
    <property type="entry name" value="GroEL-like equatorial domain"/>
    <property type="match status" value="1"/>
</dbReference>
<dbReference type="Gene3D" id="3.30.260.10">
    <property type="entry name" value="TCP-1-like chaperonin intermediate domain"/>
    <property type="match status" value="1"/>
</dbReference>
<dbReference type="HAMAP" id="MF_00600">
    <property type="entry name" value="CH60"/>
    <property type="match status" value="1"/>
</dbReference>
<dbReference type="InterPro" id="IPR018370">
    <property type="entry name" value="Chaperonin_Cpn60_CS"/>
</dbReference>
<dbReference type="InterPro" id="IPR001844">
    <property type="entry name" value="Cpn60/GroEL"/>
</dbReference>
<dbReference type="InterPro" id="IPR002423">
    <property type="entry name" value="Cpn60/GroEL/TCP-1"/>
</dbReference>
<dbReference type="InterPro" id="IPR027409">
    <property type="entry name" value="GroEL-like_apical_dom_sf"/>
</dbReference>
<dbReference type="InterPro" id="IPR027413">
    <property type="entry name" value="GROEL-like_equatorial_sf"/>
</dbReference>
<dbReference type="InterPro" id="IPR027410">
    <property type="entry name" value="TCP-1-like_intermed_sf"/>
</dbReference>
<dbReference type="NCBIfam" id="TIGR02348">
    <property type="entry name" value="GroEL"/>
    <property type="match status" value="1"/>
</dbReference>
<dbReference type="NCBIfam" id="NF000592">
    <property type="entry name" value="PRK00013.1"/>
    <property type="match status" value="1"/>
</dbReference>
<dbReference type="NCBIfam" id="NF009487">
    <property type="entry name" value="PRK12849.1"/>
    <property type="match status" value="1"/>
</dbReference>
<dbReference type="NCBIfam" id="NF009488">
    <property type="entry name" value="PRK12850.1"/>
    <property type="match status" value="1"/>
</dbReference>
<dbReference type="NCBIfam" id="NF009489">
    <property type="entry name" value="PRK12851.1"/>
    <property type="match status" value="1"/>
</dbReference>
<dbReference type="PANTHER" id="PTHR45633">
    <property type="entry name" value="60 KDA HEAT SHOCK PROTEIN, MITOCHONDRIAL"/>
    <property type="match status" value="1"/>
</dbReference>
<dbReference type="Pfam" id="PF00118">
    <property type="entry name" value="Cpn60_TCP1"/>
    <property type="match status" value="1"/>
</dbReference>
<dbReference type="PRINTS" id="PR00298">
    <property type="entry name" value="CHAPERONIN60"/>
</dbReference>
<dbReference type="SUPFAM" id="SSF52029">
    <property type="entry name" value="GroEL apical domain-like"/>
    <property type="match status" value="1"/>
</dbReference>
<dbReference type="SUPFAM" id="SSF48592">
    <property type="entry name" value="GroEL equatorial domain-like"/>
    <property type="match status" value="1"/>
</dbReference>
<dbReference type="SUPFAM" id="SSF54849">
    <property type="entry name" value="GroEL-intermediate domain like"/>
    <property type="match status" value="2"/>
</dbReference>
<dbReference type="PROSITE" id="PS00296">
    <property type="entry name" value="CHAPERONINS_CPN60"/>
    <property type="match status" value="1"/>
</dbReference>
<feature type="transit peptide" description="Chloroplast" evidence="1">
    <location>
        <begin position="1"/>
        <end position="46"/>
    </location>
</feature>
<feature type="chain" id="PRO_0000005016" description="Chaperonin 60 subunit alpha 1, chloroplastic">
    <location>
        <begin position="47"/>
        <end position="586"/>
    </location>
</feature>
<feature type="modified residue" description="Phosphoserine" evidence="8 9">
    <location>
        <position position="90"/>
    </location>
</feature>
<feature type="mutagenesis site" description="Retarded growth and pale-green leaves." evidence="5">
    <original>D</original>
    <variation>A</variation>
    <location>
        <position position="335"/>
    </location>
</feature>
<feature type="mutagenesis site" description="In arc2; fewer, but larger chloroplasts." evidence="4">
    <original>A</original>
    <variation>V</variation>
    <location>
        <position position="342"/>
    </location>
</feature>
<feature type="sequence conflict" description="In Ref. 5; AAM63618." evidence="7" ref="5">
    <original>G</original>
    <variation>D</variation>
    <location>
        <position position="184"/>
    </location>
</feature>
<feature type="sequence conflict" description="In Ref. 6; AAA32724." evidence="7" ref="6">
    <original>D</original>
    <variation>V</variation>
    <location>
        <position position="186"/>
    </location>
</feature>
<feature type="sequence conflict" description="In Ref. 6; AAA32724." evidence="7" ref="6">
    <original>I</original>
    <variation>Y</variation>
    <location>
        <position position="188"/>
    </location>
</feature>
<feature type="sequence conflict" description="In Ref. 7; BAD95121." evidence="7" ref="7">
    <original>D</original>
    <variation>G</variation>
    <location>
        <position position="569"/>
    </location>
</feature>
<organism>
    <name type="scientific">Arabidopsis thaliana</name>
    <name type="common">Mouse-ear cress</name>
    <dbReference type="NCBI Taxonomy" id="3702"/>
    <lineage>
        <taxon>Eukaryota</taxon>
        <taxon>Viridiplantae</taxon>
        <taxon>Streptophyta</taxon>
        <taxon>Embryophyta</taxon>
        <taxon>Tracheophyta</taxon>
        <taxon>Spermatophyta</taxon>
        <taxon>Magnoliopsida</taxon>
        <taxon>eudicotyledons</taxon>
        <taxon>Gunneridae</taxon>
        <taxon>Pentapetalae</taxon>
        <taxon>rosids</taxon>
        <taxon>malvids</taxon>
        <taxon>Brassicales</taxon>
        <taxon>Brassicaceae</taxon>
        <taxon>Camelineae</taxon>
        <taxon>Arabidopsis</taxon>
    </lineage>
</organism>